<proteinExistence type="evidence at transcript level"/>
<feature type="initiator methionine" description="Removed" evidence="2">
    <location>
        <position position="1"/>
    </location>
</feature>
<feature type="chain" id="PRO_0000144203" description="Chloride intracellular channel protein 1">
    <location>
        <begin position="2"/>
        <end position="110" status="greater than"/>
    </location>
</feature>
<feature type="transmembrane region" description="Helical; Note=After insertion into the membrane" evidence="4">
    <location>
        <begin position="26"/>
        <end position="46"/>
    </location>
</feature>
<feature type="region of interest" description="Required for insertion into the membrane" evidence="1">
    <location>
        <begin position="2"/>
        <end position="90"/>
    </location>
</feature>
<feature type="short sequence motif" description="G-site" evidence="2">
    <location>
        <begin position="24"/>
        <end position="27"/>
    </location>
</feature>
<feature type="modified residue" description="N-acetylalanine" evidence="2">
    <location>
        <position position="2"/>
    </location>
</feature>
<feature type="modified residue" description="N6-acetyllysine" evidence="2">
    <location>
        <position position="13"/>
    </location>
</feature>
<feature type="disulfide bond" evidence="1">
    <location>
        <begin position="24"/>
        <end position="59"/>
    </location>
</feature>
<feature type="non-terminal residue">
    <location>
        <position position="110"/>
    </location>
</feature>
<name>CLIC1_PIG</name>
<protein>
    <recommendedName>
        <fullName>Chloride intracellular channel protein 1</fullName>
    </recommendedName>
    <alternativeName>
        <fullName evidence="2">Glutaredoxin-like oxidoreductase CLIC1</fullName>
        <ecNumber evidence="2">1.8.-.-</ecNumber>
    </alternativeName>
    <alternativeName>
        <fullName evidence="2">Glutathione-dependent dehydroascorbate reductase CLIC1</fullName>
        <ecNumber evidence="2">1.8.5.1</ecNumber>
    </alternativeName>
    <alternativeName>
        <fullName>Nuclear chloride ion channel 27</fullName>
    </alternativeName>
</protein>
<keyword id="KW-0007">Acetylation</keyword>
<keyword id="KW-1003">Cell membrane</keyword>
<keyword id="KW-0868">Chloride</keyword>
<keyword id="KW-0869">Chloride channel</keyword>
<keyword id="KW-0963">Cytoplasm</keyword>
<keyword id="KW-1015">Disulfide bond</keyword>
<keyword id="KW-0256">Endoplasmic reticulum</keyword>
<keyword id="KW-0407">Ion channel</keyword>
<keyword id="KW-0406">Ion transport</keyword>
<keyword id="KW-0472">Membrane</keyword>
<keyword id="KW-0539">Nucleus</keyword>
<keyword id="KW-0560">Oxidoreductase</keyword>
<keyword id="KW-1185">Reference proteome</keyword>
<keyword id="KW-0812">Transmembrane</keyword>
<keyword id="KW-1133">Transmembrane helix</keyword>
<keyword id="KW-0813">Transport</keyword>
<keyword id="KW-0851">Voltage-gated channel</keyword>
<comment type="function">
    <text evidence="2">In the soluble state, catalyzes glutaredoxin-like thiol disulfide exchange reactions with reduced glutathione as electron donor. Reduces selenite and dehydroascorbate and may act as an antioxidant during oxidative stress response (By similarity). Can insert into membranes and form voltage-dependent multi-ion conductive channels. Membrane insertion seems to be redox-regulated and may occur only under oxidizing conditions. Involved in regulation of the cell cycle (By similarity).</text>
</comment>
<comment type="catalytic activity">
    <reaction evidence="2">
        <text>L-dehydroascorbate + 2 glutathione = glutathione disulfide + L-ascorbate</text>
        <dbReference type="Rhea" id="RHEA:24424"/>
        <dbReference type="ChEBI" id="CHEBI:38290"/>
        <dbReference type="ChEBI" id="CHEBI:57925"/>
        <dbReference type="ChEBI" id="CHEBI:58297"/>
        <dbReference type="ChEBI" id="CHEBI:58539"/>
        <dbReference type="EC" id="1.8.5.1"/>
    </reaction>
    <physiologicalReaction direction="left-to-right" evidence="2">
        <dbReference type="Rhea" id="RHEA:24425"/>
    </physiologicalReaction>
</comment>
<comment type="catalytic activity">
    <reaction evidence="2">
        <text>chloride(in) = chloride(out)</text>
        <dbReference type="Rhea" id="RHEA:29823"/>
        <dbReference type="ChEBI" id="CHEBI:17996"/>
    </reaction>
</comment>
<comment type="catalytic activity">
    <reaction evidence="2">
        <text>iodide(out) = iodide(in)</text>
        <dbReference type="Rhea" id="RHEA:66324"/>
        <dbReference type="ChEBI" id="CHEBI:16382"/>
    </reaction>
</comment>
<comment type="catalytic activity">
    <reaction evidence="2">
        <text>thiocyanate(in) = thiocyanate(out)</text>
        <dbReference type="Rhea" id="RHEA:75347"/>
        <dbReference type="ChEBI" id="CHEBI:18022"/>
    </reaction>
</comment>
<comment type="catalytic activity">
    <reaction evidence="2">
        <text>nitrate(in) = nitrate(out)</text>
        <dbReference type="Rhea" id="RHEA:34923"/>
        <dbReference type="ChEBI" id="CHEBI:17632"/>
    </reaction>
</comment>
<comment type="catalytic activity">
    <reaction evidence="2">
        <text>bromide(in) = bromide(out)</text>
        <dbReference type="Rhea" id="RHEA:75383"/>
        <dbReference type="ChEBI" id="CHEBI:15858"/>
    </reaction>
</comment>
<comment type="catalytic activity">
    <reaction evidence="2">
        <text>fluoride(in) = fluoride(out)</text>
        <dbReference type="Rhea" id="RHEA:76159"/>
        <dbReference type="ChEBI" id="CHEBI:17051"/>
    </reaction>
</comment>
<comment type="subunit">
    <text evidence="1">Monomer. Homodimer (in vitro). Interacts with TRAPPC2. Dimerization requires a conformation change that leads to the exposure of a large hydrophobic surface. In vivo, this may lead to membrane insertion (By similarity).</text>
</comment>
<comment type="subcellular location">
    <subcellularLocation>
        <location evidence="2">Nucleus</location>
    </subcellularLocation>
    <subcellularLocation>
        <location evidence="2">Nucleus membrane</location>
        <topology evidence="2">Single-pass membrane protein</topology>
    </subcellularLocation>
    <subcellularLocation>
        <location evidence="2">Cytoplasm</location>
    </subcellularLocation>
    <subcellularLocation>
        <location evidence="2">Cell membrane</location>
        <topology evidence="2">Single-pass membrane protein</topology>
    </subcellularLocation>
    <subcellularLocation>
        <location evidence="3">Endoplasmic reticulum</location>
    </subcellularLocation>
    <text evidence="2 3">Mostly in the nucleus including in the nuclear membrane. Small amount in the cytoplasm and the plasma membrane. Exists both as soluble cytoplasmic protein and as membrane protein with probably a single transmembrane domain (By similarity). Might not be present in the nucleus of cardiac cells (By similarity).</text>
</comment>
<comment type="domain">
    <text evidence="2">The active G-site contains a monothiol Cys-X-X-Ser motif which mediates glutathione-dependent redox catalysis.</text>
</comment>
<comment type="domain">
    <text evidence="2">Members of this family may change from a globular, soluble state to a state where the N-terminal domain is inserted into the membrane and functions as a channel. The redox status of the active cysteine in Cys-X-X-Cys/Ser motif likely determines the capacity to adopt a soluble or membrane-inserted state. A conformation change of the N-terminal domain is thought to expose hydrophobic surfaces that trigger membrane insertion.</text>
</comment>
<comment type="similarity">
    <text evidence="5">Belongs to the chloride channel CLIC family.</text>
</comment>
<sequence length="110" mass="12184">MAEEQPQVELFVKAGSDGAKIGNCPFSQRLFMVLWLKGVTFNVTTVDTKRRTETVQKLCPGGQLPFLLYGTEVHTDTNKIEEFLEAVLCPPRYPKLAALNPESNTAGLDI</sequence>
<evidence type="ECO:0000250" key="1"/>
<evidence type="ECO:0000250" key="2">
    <source>
        <dbReference type="UniProtKB" id="O00299"/>
    </source>
</evidence>
<evidence type="ECO:0000250" key="3">
    <source>
        <dbReference type="UniProtKB" id="Q6MG61"/>
    </source>
</evidence>
<evidence type="ECO:0000255" key="4"/>
<evidence type="ECO:0000305" key="5"/>
<gene>
    <name type="primary">CLIC1</name>
</gene>
<reference key="1">
    <citation type="journal article" date="1996" name="Mamm. Genome">
        <title>Evaluation and characterization of a porcine small intestine cDNA library: analysis of 839 clones.</title>
        <authorList>
            <person name="Winteroe A.K."/>
            <person name="Fredholm M."/>
            <person name="Davies W."/>
        </authorList>
    </citation>
    <scope>NUCLEOTIDE SEQUENCE [LARGE SCALE MRNA]</scope>
    <source>
        <tissue>Small intestine</tissue>
    </source>
</reference>
<dbReference type="EC" id="1.8.-.-" evidence="2"/>
<dbReference type="EC" id="1.8.5.1" evidence="2"/>
<dbReference type="EMBL" id="F14837">
    <property type="protein sequence ID" value="CAA23286.1"/>
    <property type="molecule type" value="mRNA"/>
</dbReference>
<dbReference type="SMR" id="Q29238"/>
<dbReference type="STRING" id="9823.ENSSSCP00000050481"/>
<dbReference type="PeptideAtlas" id="Q29238"/>
<dbReference type="InParanoid" id="Q29238"/>
<dbReference type="Proteomes" id="UP000008227">
    <property type="component" value="Unplaced"/>
</dbReference>
<dbReference type="Proteomes" id="UP000314985">
    <property type="component" value="Unplaced"/>
</dbReference>
<dbReference type="Proteomes" id="UP000694570">
    <property type="component" value="Unplaced"/>
</dbReference>
<dbReference type="Proteomes" id="UP000694571">
    <property type="component" value="Unplaced"/>
</dbReference>
<dbReference type="Proteomes" id="UP000694720">
    <property type="component" value="Unplaced"/>
</dbReference>
<dbReference type="Proteomes" id="UP000694722">
    <property type="component" value="Unplaced"/>
</dbReference>
<dbReference type="Proteomes" id="UP000694723">
    <property type="component" value="Unplaced"/>
</dbReference>
<dbReference type="Proteomes" id="UP000694724">
    <property type="component" value="Unplaced"/>
</dbReference>
<dbReference type="Proteomes" id="UP000694725">
    <property type="component" value="Unplaced"/>
</dbReference>
<dbReference type="Proteomes" id="UP000694726">
    <property type="component" value="Unplaced"/>
</dbReference>
<dbReference type="Proteomes" id="UP000694727">
    <property type="component" value="Unplaced"/>
</dbReference>
<dbReference type="Proteomes" id="UP000694728">
    <property type="component" value="Unplaced"/>
</dbReference>
<dbReference type="GO" id="GO:0034707">
    <property type="term" value="C:chloride channel complex"/>
    <property type="evidence" value="ECO:0007669"/>
    <property type="project" value="UniProtKB-KW"/>
</dbReference>
<dbReference type="GO" id="GO:0005783">
    <property type="term" value="C:endoplasmic reticulum"/>
    <property type="evidence" value="ECO:0007669"/>
    <property type="project" value="UniProtKB-SubCell"/>
</dbReference>
<dbReference type="GO" id="GO:0031965">
    <property type="term" value="C:nuclear membrane"/>
    <property type="evidence" value="ECO:0007669"/>
    <property type="project" value="UniProtKB-SubCell"/>
</dbReference>
<dbReference type="GO" id="GO:0005886">
    <property type="term" value="C:plasma membrane"/>
    <property type="evidence" value="ECO:0007669"/>
    <property type="project" value="UniProtKB-SubCell"/>
</dbReference>
<dbReference type="GO" id="GO:0005254">
    <property type="term" value="F:chloride channel activity"/>
    <property type="evidence" value="ECO:0007669"/>
    <property type="project" value="UniProtKB-KW"/>
</dbReference>
<dbReference type="GO" id="GO:0016491">
    <property type="term" value="F:oxidoreductase activity"/>
    <property type="evidence" value="ECO:0007669"/>
    <property type="project" value="UniProtKB-KW"/>
</dbReference>
<dbReference type="CDD" id="cd03061">
    <property type="entry name" value="GST_N_CLIC"/>
    <property type="match status" value="1"/>
</dbReference>
<dbReference type="FunFam" id="3.40.30.10:FF:000129">
    <property type="entry name" value="Chloride intracellular channel protein 1"/>
    <property type="match status" value="1"/>
</dbReference>
<dbReference type="Gene3D" id="3.40.30.10">
    <property type="entry name" value="Glutaredoxin"/>
    <property type="match status" value="1"/>
</dbReference>
<dbReference type="InterPro" id="IPR002946">
    <property type="entry name" value="CLIC"/>
</dbReference>
<dbReference type="InterPro" id="IPR053823">
    <property type="entry name" value="CLIC_N"/>
</dbReference>
<dbReference type="InterPro" id="IPR036249">
    <property type="entry name" value="Thioredoxin-like_sf"/>
</dbReference>
<dbReference type="PANTHER" id="PTHR45476:SF2">
    <property type="entry name" value="CHLORIDE INTRACELLULAR CHANNEL PROTEIN"/>
    <property type="match status" value="1"/>
</dbReference>
<dbReference type="PANTHER" id="PTHR45476">
    <property type="entry name" value="CHLORIDE INTRACELLULAR CHANNEL PROTEIN 6-RELATED"/>
    <property type="match status" value="1"/>
</dbReference>
<dbReference type="Pfam" id="PF22441">
    <property type="entry name" value="CLIC-like_N"/>
    <property type="match status" value="1"/>
</dbReference>
<dbReference type="PRINTS" id="PR01263">
    <property type="entry name" value="INTCLCHANNEL"/>
</dbReference>
<dbReference type="SUPFAM" id="SSF52833">
    <property type="entry name" value="Thioredoxin-like"/>
    <property type="match status" value="1"/>
</dbReference>
<organism>
    <name type="scientific">Sus scrofa</name>
    <name type="common">Pig</name>
    <dbReference type="NCBI Taxonomy" id="9823"/>
    <lineage>
        <taxon>Eukaryota</taxon>
        <taxon>Metazoa</taxon>
        <taxon>Chordata</taxon>
        <taxon>Craniata</taxon>
        <taxon>Vertebrata</taxon>
        <taxon>Euteleostomi</taxon>
        <taxon>Mammalia</taxon>
        <taxon>Eutheria</taxon>
        <taxon>Laurasiatheria</taxon>
        <taxon>Artiodactyla</taxon>
        <taxon>Suina</taxon>
        <taxon>Suidae</taxon>
        <taxon>Sus</taxon>
    </lineage>
</organism>
<accession>Q29238</accession>